<evidence type="ECO:0000255" key="1"/>
<evidence type="ECO:0000305" key="2"/>
<comment type="function">
    <text>Potential transporter for phosphate.</text>
</comment>
<comment type="subcellular location">
    <subcellularLocation>
        <location evidence="2">Cell membrane</location>
        <topology evidence="2">Multi-pass membrane protein</topology>
    </subcellularLocation>
</comment>
<comment type="similarity">
    <text evidence="2">Belongs to the inorganic phosphate transporter (PiT) (TC 2.A.20) family.</text>
</comment>
<gene>
    <name type="ordered locus">PYRAB14010</name>
    <name type="ORF">PAB0927</name>
</gene>
<reference key="1">
    <citation type="journal article" date="2003" name="Mol. Microbiol.">
        <title>An integrated analysis of the genome of the hyperthermophilic archaeon Pyrococcus abyssi.</title>
        <authorList>
            <person name="Cohen G.N."/>
            <person name="Barbe V."/>
            <person name="Flament D."/>
            <person name="Galperin M."/>
            <person name="Heilig R."/>
            <person name="Lecompte O."/>
            <person name="Poch O."/>
            <person name="Prieur D."/>
            <person name="Querellou J."/>
            <person name="Ripp R."/>
            <person name="Thierry J.-C."/>
            <person name="Van der Oost J."/>
            <person name="Weissenbach J."/>
            <person name="Zivanovic Y."/>
            <person name="Forterre P."/>
        </authorList>
    </citation>
    <scope>NUCLEOTIDE SEQUENCE [LARGE SCALE GENOMIC DNA]</scope>
    <source>
        <strain>GE5 / Orsay</strain>
    </source>
</reference>
<reference key="2">
    <citation type="journal article" date="2012" name="Curr. Microbiol.">
        <title>Re-annotation of two hyperthermophilic archaea Pyrococcus abyssi GE5 and Pyrococcus furiosus DSM 3638.</title>
        <authorList>
            <person name="Gao J."/>
            <person name="Wang J."/>
        </authorList>
    </citation>
    <scope>GENOME REANNOTATION</scope>
    <source>
        <strain>GE5 / Orsay</strain>
    </source>
</reference>
<proteinExistence type="inferred from homology"/>
<protein>
    <recommendedName>
        <fullName>Putative phosphate permease PYRAB14010</fullName>
    </recommendedName>
</protein>
<organism>
    <name type="scientific">Pyrococcus abyssi (strain GE5 / Orsay)</name>
    <dbReference type="NCBI Taxonomy" id="272844"/>
    <lineage>
        <taxon>Archaea</taxon>
        <taxon>Methanobacteriati</taxon>
        <taxon>Methanobacteriota</taxon>
        <taxon>Thermococci</taxon>
        <taxon>Thermococcales</taxon>
        <taxon>Thermococcaceae</taxon>
        <taxon>Pyrococcus</taxon>
    </lineage>
</organism>
<keyword id="KW-1003">Cell membrane</keyword>
<keyword id="KW-0472">Membrane</keyword>
<keyword id="KW-0592">Phosphate transport</keyword>
<keyword id="KW-0812">Transmembrane</keyword>
<keyword id="KW-1133">Transmembrane helix</keyword>
<keyword id="KW-0813">Transport</keyword>
<dbReference type="EMBL" id="AJ248287">
    <property type="protein sequence ID" value="CAB50306.1"/>
    <property type="molecule type" value="Genomic_DNA"/>
</dbReference>
<dbReference type="EMBL" id="HE613800">
    <property type="protein sequence ID" value="CCE70844.1"/>
    <property type="molecule type" value="Genomic_DNA"/>
</dbReference>
<dbReference type="PIR" id="E75051">
    <property type="entry name" value="E75051"/>
</dbReference>
<dbReference type="RefSeq" id="WP_010868516.1">
    <property type="nucleotide sequence ID" value="NC_000868.1"/>
</dbReference>
<dbReference type="SMR" id="Q9UYV6"/>
<dbReference type="STRING" id="272844.PAB0927"/>
<dbReference type="KEGG" id="pab:PAB0927"/>
<dbReference type="PATRIC" id="fig|272844.11.peg.1489"/>
<dbReference type="eggNOG" id="arCOG02267">
    <property type="taxonomic scope" value="Archaea"/>
</dbReference>
<dbReference type="HOGENOM" id="CLU_015355_3_3_2"/>
<dbReference type="OrthoDB" id="101311at2157"/>
<dbReference type="PhylomeDB" id="Q9UYV6"/>
<dbReference type="Proteomes" id="UP000000810">
    <property type="component" value="Chromosome"/>
</dbReference>
<dbReference type="Proteomes" id="UP000009139">
    <property type="component" value="Chromosome"/>
</dbReference>
<dbReference type="GO" id="GO:0005886">
    <property type="term" value="C:plasma membrane"/>
    <property type="evidence" value="ECO:0007669"/>
    <property type="project" value="UniProtKB-SubCell"/>
</dbReference>
<dbReference type="GO" id="GO:0005315">
    <property type="term" value="F:phosphate transmembrane transporter activity"/>
    <property type="evidence" value="ECO:0007669"/>
    <property type="project" value="InterPro"/>
</dbReference>
<dbReference type="GO" id="GO:0035435">
    <property type="term" value="P:phosphate ion transmembrane transport"/>
    <property type="evidence" value="ECO:0007669"/>
    <property type="project" value="TreeGrafter"/>
</dbReference>
<dbReference type="InterPro" id="IPR001204">
    <property type="entry name" value="Phos_transporter"/>
</dbReference>
<dbReference type="PANTHER" id="PTHR11101">
    <property type="entry name" value="PHOSPHATE TRANSPORTER"/>
    <property type="match status" value="1"/>
</dbReference>
<dbReference type="PANTHER" id="PTHR11101:SF80">
    <property type="entry name" value="PHOSPHATE TRANSPORTER"/>
    <property type="match status" value="1"/>
</dbReference>
<dbReference type="Pfam" id="PF01384">
    <property type="entry name" value="PHO4"/>
    <property type="match status" value="1"/>
</dbReference>
<feature type="chain" id="PRO_0000080805" description="Putative phosphate permease PYRAB14010">
    <location>
        <begin position="1"/>
        <end position="405"/>
    </location>
</feature>
<feature type="transmembrane region" description="Helical" evidence="1">
    <location>
        <begin position="3"/>
        <end position="23"/>
    </location>
</feature>
<feature type="transmembrane region" description="Helical" evidence="1">
    <location>
        <begin position="44"/>
        <end position="64"/>
    </location>
</feature>
<feature type="transmembrane region" description="Helical" evidence="1">
    <location>
        <begin position="82"/>
        <end position="102"/>
    </location>
</feature>
<feature type="transmembrane region" description="Helical" evidence="1">
    <location>
        <begin position="114"/>
        <end position="134"/>
    </location>
</feature>
<feature type="transmembrane region" description="Helical" evidence="1">
    <location>
        <begin position="138"/>
        <end position="158"/>
    </location>
</feature>
<feature type="transmembrane region" description="Helical" evidence="1">
    <location>
        <begin position="181"/>
        <end position="201"/>
    </location>
</feature>
<feature type="transmembrane region" description="Helical" evidence="1">
    <location>
        <begin position="207"/>
        <end position="227"/>
    </location>
</feature>
<feature type="transmembrane region" description="Helical" evidence="1">
    <location>
        <begin position="264"/>
        <end position="284"/>
    </location>
</feature>
<feature type="transmembrane region" description="Helical" evidence="1">
    <location>
        <begin position="287"/>
        <end position="307"/>
    </location>
</feature>
<feature type="transmembrane region" description="Helical" evidence="1">
    <location>
        <begin position="329"/>
        <end position="349"/>
    </location>
</feature>
<feature type="transmembrane region" description="Helical" evidence="1">
    <location>
        <begin position="384"/>
        <end position="404"/>
    </location>
</feature>
<accession>Q9UYV6</accession>
<accession>G8ZHK7</accession>
<sequence>MDMDPWLLLTLILGLAMAWAIGANDAANSMSTAVGAGAITPKQAVLIAGILEFTGAYFFGKTVTETIRKGIIDPSRISDPNVLVYGSLAALLGATIWLVIATKYGLPVSTTHSIIGGIVGYGVVYAGLEIVNWGKMASVVLSWILSPIVGAIFAFFIFKAIRRTVLESEDPIRSAKRWSPVWIGLAFVVIGTMFYIKVLHGKSLYMGVLKLGIPVGLVVFLITSMILRVKFPKVDPYLGAEFIFRRVQVITSGYVALAHGANDVANAIGPVAAVYTIATMGMAGAKVPVPRWILALGGLGIAIGVATYGYRVMETVGKKITELTNTRGFTIDFSAATVVLIASWLGMPISTTHTVVGAVIGVGLARGVKAINKSIVRDIIISWFVTVPVAGLISAIIFKILWIVG</sequence>
<name>Y1401_PYRAB</name>